<accession>Q2GBJ9</accession>
<keyword id="KW-0997">Cell inner membrane</keyword>
<keyword id="KW-1003">Cell membrane</keyword>
<keyword id="KW-0169">Cobalamin biosynthesis</keyword>
<keyword id="KW-0460">Magnesium</keyword>
<keyword id="KW-0472">Membrane</keyword>
<keyword id="KW-1185">Reference proteome</keyword>
<keyword id="KW-0808">Transferase</keyword>
<keyword id="KW-0812">Transmembrane</keyword>
<keyword id="KW-1133">Transmembrane helix</keyword>
<proteinExistence type="inferred from homology"/>
<gene>
    <name evidence="1" type="primary">cobS</name>
    <name type="ordered locus">Saro_0326</name>
</gene>
<comment type="function">
    <text evidence="1">Joins adenosylcobinamide-GDP and alpha-ribazole to generate adenosylcobalamin (Ado-cobalamin). Also synthesizes adenosylcobalamin 5'-phosphate from adenosylcobinamide-GDP and alpha-ribazole 5'-phosphate.</text>
</comment>
<comment type="catalytic activity">
    <reaction evidence="1">
        <text>alpha-ribazole + adenosylcob(III)inamide-GDP = adenosylcob(III)alamin + GMP + H(+)</text>
        <dbReference type="Rhea" id="RHEA:16049"/>
        <dbReference type="ChEBI" id="CHEBI:10329"/>
        <dbReference type="ChEBI" id="CHEBI:15378"/>
        <dbReference type="ChEBI" id="CHEBI:18408"/>
        <dbReference type="ChEBI" id="CHEBI:58115"/>
        <dbReference type="ChEBI" id="CHEBI:60487"/>
        <dbReference type="EC" id="2.7.8.26"/>
    </reaction>
</comment>
<comment type="catalytic activity">
    <reaction evidence="1">
        <text>alpha-ribazole 5'-phosphate + adenosylcob(III)inamide-GDP = adenosylcob(III)alamin 5'-phosphate + GMP + H(+)</text>
        <dbReference type="Rhea" id="RHEA:23560"/>
        <dbReference type="ChEBI" id="CHEBI:15378"/>
        <dbReference type="ChEBI" id="CHEBI:57918"/>
        <dbReference type="ChEBI" id="CHEBI:58115"/>
        <dbReference type="ChEBI" id="CHEBI:60487"/>
        <dbReference type="ChEBI" id="CHEBI:60493"/>
        <dbReference type="EC" id="2.7.8.26"/>
    </reaction>
</comment>
<comment type="cofactor">
    <cofactor evidence="1">
        <name>Mg(2+)</name>
        <dbReference type="ChEBI" id="CHEBI:18420"/>
    </cofactor>
</comment>
<comment type="pathway">
    <text evidence="1">Cofactor biosynthesis; adenosylcobalamin biosynthesis; adenosylcobalamin from cob(II)yrinate a,c-diamide: step 7/7.</text>
</comment>
<comment type="subcellular location">
    <subcellularLocation>
        <location evidence="1">Cell inner membrane</location>
        <topology evidence="1">Multi-pass membrane protein</topology>
    </subcellularLocation>
</comment>
<comment type="similarity">
    <text evidence="1">Belongs to the CobS family.</text>
</comment>
<dbReference type="EC" id="2.7.8.26" evidence="1"/>
<dbReference type="EMBL" id="CP000248">
    <property type="protein sequence ID" value="ABD24774.1"/>
    <property type="molecule type" value="Genomic_DNA"/>
</dbReference>
<dbReference type="RefSeq" id="WP_011443988.1">
    <property type="nucleotide sequence ID" value="NC_007794.1"/>
</dbReference>
<dbReference type="STRING" id="279238.Saro_0326"/>
<dbReference type="KEGG" id="nar:Saro_0326"/>
<dbReference type="eggNOG" id="COG0368">
    <property type="taxonomic scope" value="Bacteria"/>
</dbReference>
<dbReference type="HOGENOM" id="CLU_057426_3_1_5"/>
<dbReference type="UniPathway" id="UPA00148">
    <property type="reaction ID" value="UER00238"/>
</dbReference>
<dbReference type="Proteomes" id="UP000009134">
    <property type="component" value="Chromosome"/>
</dbReference>
<dbReference type="GO" id="GO:0005886">
    <property type="term" value="C:plasma membrane"/>
    <property type="evidence" value="ECO:0007669"/>
    <property type="project" value="UniProtKB-SubCell"/>
</dbReference>
<dbReference type="GO" id="GO:0051073">
    <property type="term" value="F:adenosylcobinamide-GDP ribazoletransferase activity"/>
    <property type="evidence" value="ECO:0007669"/>
    <property type="project" value="UniProtKB-UniRule"/>
</dbReference>
<dbReference type="GO" id="GO:0008818">
    <property type="term" value="F:cobalamin 5'-phosphate synthase activity"/>
    <property type="evidence" value="ECO:0007669"/>
    <property type="project" value="UniProtKB-UniRule"/>
</dbReference>
<dbReference type="GO" id="GO:0009236">
    <property type="term" value="P:cobalamin biosynthetic process"/>
    <property type="evidence" value="ECO:0007669"/>
    <property type="project" value="UniProtKB-UniRule"/>
</dbReference>
<dbReference type="HAMAP" id="MF_00719">
    <property type="entry name" value="CobS"/>
    <property type="match status" value="1"/>
</dbReference>
<dbReference type="InterPro" id="IPR003805">
    <property type="entry name" value="CobS"/>
</dbReference>
<dbReference type="PANTHER" id="PTHR34148">
    <property type="entry name" value="ADENOSYLCOBINAMIDE-GDP RIBAZOLETRANSFERASE"/>
    <property type="match status" value="1"/>
</dbReference>
<dbReference type="PANTHER" id="PTHR34148:SF1">
    <property type="entry name" value="ADENOSYLCOBINAMIDE-GDP RIBAZOLETRANSFERASE"/>
    <property type="match status" value="1"/>
</dbReference>
<dbReference type="Pfam" id="PF02654">
    <property type="entry name" value="CobS"/>
    <property type="match status" value="1"/>
</dbReference>
<protein>
    <recommendedName>
        <fullName evidence="1">Adenosylcobinamide-GDP ribazoletransferase</fullName>
        <ecNumber evidence="1">2.7.8.26</ecNumber>
    </recommendedName>
    <alternativeName>
        <fullName evidence="1">Cobalamin synthase</fullName>
    </alternativeName>
    <alternativeName>
        <fullName evidence="1">Cobalamin-5'-phosphate synthase</fullName>
    </alternativeName>
</protein>
<feature type="chain" id="PRO_1000132590" description="Adenosylcobinamide-GDP ribazoletransferase">
    <location>
        <begin position="1"/>
        <end position="246"/>
    </location>
</feature>
<feature type="transmembrane region" description="Helical" evidence="1">
    <location>
        <begin position="37"/>
        <end position="57"/>
    </location>
</feature>
<feature type="transmembrane region" description="Helical" evidence="1">
    <location>
        <begin position="64"/>
        <end position="84"/>
    </location>
</feature>
<feature type="transmembrane region" description="Helical" evidence="1">
    <location>
        <begin position="100"/>
        <end position="122"/>
    </location>
</feature>
<feature type="transmembrane region" description="Helical" evidence="1">
    <location>
        <begin position="139"/>
        <end position="159"/>
    </location>
</feature>
<feature type="transmembrane region" description="Helical" evidence="1">
    <location>
        <begin position="185"/>
        <end position="205"/>
    </location>
</feature>
<feature type="transmembrane region" description="Helical" evidence="1">
    <location>
        <begin position="223"/>
        <end position="243"/>
    </location>
</feature>
<reference key="1">
    <citation type="submission" date="2006-01" db="EMBL/GenBank/DDBJ databases">
        <title>Complete sequence of Novosphingobium aromaticivorans DSM 12444.</title>
        <authorList>
            <consortium name="US DOE Joint Genome Institute"/>
            <person name="Copeland A."/>
            <person name="Lucas S."/>
            <person name="Lapidus A."/>
            <person name="Barry K."/>
            <person name="Detter J.C."/>
            <person name="Glavina T."/>
            <person name="Hammon N."/>
            <person name="Israni S."/>
            <person name="Pitluck S."/>
            <person name="Chain P."/>
            <person name="Malfatti S."/>
            <person name="Shin M."/>
            <person name="Vergez L."/>
            <person name="Schmutz J."/>
            <person name="Larimer F."/>
            <person name="Land M."/>
            <person name="Kyrpides N."/>
            <person name="Ivanova N."/>
            <person name="Fredrickson J."/>
            <person name="Balkwill D."/>
            <person name="Romine M.F."/>
            <person name="Richardson P."/>
        </authorList>
    </citation>
    <scope>NUCLEOTIDE SEQUENCE [LARGE SCALE GENOMIC DNA]</scope>
    <source>
        <strain>ATCC 700278 / DSM 12444 / CCUG 56034 / CIP 105152 / NBRC 16084 / F199</strain>
    </source>
</reference>
<name>COBS_NOVAD</name>
<sequence length="246" mass="25914">MRGFIIALQFLTRLPMPAPLRTIVVDDAAFARSMRWFPAVGLVIGAAVAGAAWAGALVDHRLGALAALIVWVGVTGALHLDGLADLADASGAAHKDRERLLAVLADPHVGSFGVVAIVLQLLSKLVLLDMLVDARAFGALVLVPFAARIGPLVWTWWLMPLHQGLAARFRSAIGPIDLAGWAAALAAAAWFTPALLVTPLLVLWWGWHVRRALGGISGDGHGAGIELIETGLLLSVAITGLWIHTT</sequence>
<organism>
    <name type="scientific">Novosphingobium aromaticivorans (strain ATCC 700278 / DSM 12444 / CCUG 56034 / CIP 105152 / NBRC 16084 / F199)</name>
    <dbReference type="NCBI Taxonomy" id="279238"/>
    <lineage>
        <taxon>Bacteria</taxon>
        <taxon>Pseudomonadati</taxon>
        <taxon>Pseudomonadota</taxon>
        <taxon>Alphaproteobacteria</taxon>
        <taxon>Sphingomonadales</taxon>
        <taxon>Sphingomonadaceae</taxon>
        <taxon>Novosphingobium</taxon>
    </lineage>
</organism>
<evidence type="ECO:0000255" key="1">
    <source>
        <dbReference type="HAMAP-Rule" id="MF_00719"/>
    </source>
</evidence>